<proteinExistence type="inferred from homology"/>
<evidence type="ECO:0000255" key="1">
    <source>
        <dbReference type="HAMAP-Rule" id="MF_01092"/>
    </source>
</evidence>
<organism>
    <name type="scientific">Burkholderia multivorans (strain ATCC 17616 / 249)</name>
    <dbReference type="NCBI Taxonomy" id="395019"/>
    <lineage>
        <taxon>Bacteria</taxon>
        <taxon>Pseudomonadati</taxon>
        <taxon>Pseudomonadota</taxon>
        <taxon>Betaproteobacteria</taxon>
        <taxon>Burkholderiales</taxon>
        <taxon>Burkholderiaceae</taxon>
        <taxon>Burkholderia</taxon>
        <taxon>Burkholderia cepacia complex</taxon>
    </lineage>
</organism>
<gene>
    <name evidence="1" type="primary">zapD</name>
    <name type="ordered locus">Bmul_2822</name>
    <name type="ordered locus">BMULJ_00416</name>
</gene>
<keyword id="KW-0131">Cell cycle</keyword>
<keyword id="KW-0132">Cell division</keyword>
<keyword id="KW-0963">Cytoplasm</keyword>
<keyword id="KW-1185">Reference proteome</keyword>
<keyword id="KW-0717">Septation</keyword>
<feature type="chain" id="PRO_1000136931" description="Cell division protein ZapD">
    <location>
        <begin position="1"/>
        <end position="251"/>
    </location>
</feature>
<name>ZAPD_BURM1</name>
<protein>
    <recommendedName>
        <fullName evidence="1">Cell division protein ZapD</fullName>
    </recommendedName>
    <alternativeName>
        <fullName evidence="1">Z ring-associated protein D</fullName>
    </alternativeName>
</protein>
<comment type="function">
    <text evidence="1">Cell division factor that enhances FtsZ-ring assembly. Directly interacts with FtsZ and promotes bundling of FtsZ protofilaments, with a reduction in FtsZ GTPase activity.</text>
</comment>
<comment type="subunit">
    <text evidence="1">Interacts with FtsZ.</text>
</comment>
<comment type="subcellular location">
    <subcellularLocation>
        <location evidence="1">Cytoplasm</location>
    </subcellularLocation>
    <text evidence="1">Localizes to mid-cell in an FtsZ-dependent manner.</text>
</comment>
<comment type="similarity">
    <text evidence="1">Belongs to the ZapD family.</text>
</comment>
<dbReference type="EMBL" id="CP000868">
    <property type="protein sequence ID" value="ABX16506.1"/>
    <property type="molecule type" value="Genomic_DNA"/>
</dbReference>
<dbReference type="EMBL" id="AP009385">
    <property type="protein sequence ID" value="BAG42384.1"/>
    <property type="molecule type" value="Genomic_DNA"/>
</dbReference>
<dbReference type="RefSeq" id="WP_006400426.1">
    <property type="nucleotide sequence ID" value="NC_010804.1"/>
</dbReference>
<dbReference type="SMR" id="A9AI82"/>
<dbReference type="STRING" id="395019.BMULJ_00416"/>
<dbReference type="GeneID" id="89568856"/>
<dbReference type="KEGG" id="bmj:BMULJ_00416"/>
<dbReference type="KEGG" id="bmu:Bmul_2822"/>
<dbReference type="eggNOG" id="COG4582">
    <property type="taxonomic scope" value="Bacteria"/>
</dbReference>
<dbReference type="HOGENOM" id="CLU_076303_0_1_4"/>
<dbReference type="Proteomes" id="UP000008815">
    <property type="component" value="Chromosome 1"/>
</dbReference>
<dbReference type="GO" id="GO:0032153">
    <property type="term" value="C:cell division site"/>
    <property type="evidence" value="ECO:0007669"/>
    <property type="project" value="TreeGrafter"/>
</dbReference>
<dbReference type="GO" id="GO:0005737">
    <property type="term" value="C:cytoplasm"/>
    <property type="evidence" value="ECO:0007669"/>
    <property type="project" value="UniProtKB-SubCell"/>
</dbReference>
<dbReference type="GO" id="GO:0000917">
    <property type="term" value="P:division septum assembly"/>
    <property type="evidence" value="ECO:0007669"/>
    <property type="project" value="UniProtKB-KW"/>
</dbReference>
<dbReference type="GO" id="GO:0043093">
    <property type="term" value="P:FtsZ-dependent cytokinesis"/>
    <property type="evidence" value="ECO:0007669"/>
    <property type="project" value="UniProtKB-UniRule"/>
</dbReference>
<dbReference type="Gene3D" id="1.10.3900.10">
    <property type="entry name" value="YacF-like"/>
    <property type="match status" value="1"/>
</dbReference>
<dbReference type="Gene3D" id="2.60.440.10">
    <property type="entry name" value="YacF-like domains"/>
    <property type="match status" value="1"/>
</dbReference>
<dbReference type="HAMAP" id="MF_01092">
    <property type="entry name" value="ZapD"/>
    <property type="match status" value="1"/>
</dbReference>
<dbReference type="InterPro" id="IPR009777">
    <property type="entry name" value="ZapD"/>
</dbReference>
<dbReference type="InterPro" id="IPR027462">
    <property type="entry name" value="ZapD_C"/>
</dbReference>
<dbReference type="InterPro" id="IPR036268">
    <property type="entry name" value="ZapD_sf"/>
</dbReference>
<dbReference type="NCBIfam" id="NF003656">
    <property type="entry name" value="PRK05287.1-4"/>
    <property type="match status" value="1"/>
</dbReference>
<dbReference type="PANTHER" id="PTHR39455">
    <property type="entry name" value="CELL DIVISION PROTEIN ZAPD"/>
    <property type="match status" value="1"/>
</dbReference>
<dbReference type="PANTHER" id="PTHR39455:SF1">
    <property type="entry name" value="CELL DIVISION PROTEIN ZAPD"/>
    <property type="match status" value="1"/>
</dbReference>
<dbReference type="Pfam" id="PF07072">
    <property type="entry name" value="ZapD"/>
    <property type="match status" value="1"/>
</dbReference>
<dbReference type="SUPFAM" id="SSF160950">
    <property type="entry name" value="YacF-like"/>
    <property type="match status" value="1"/>
</dbReference>
<reference key="1">
    <citation type="submission" date="2007-10" db="EMBL/GenBank/DDBJ databases">
        <title>Complete sequence of chromosome 1 of Burkholderia multivorans ATCC 17616.</title>
        <authorList>
            <person name="Copeland A."/>
            <person name="Lucas S."/>
            <person name="Lapidus A."/>
            <person name="Barry K."/>
            <person name="Glavina del Rio T."/>
            <person name="Dalin E."/>
            <person name="Tice H."/>
            <person name="Pitluck S."/>
            <person name="Chain P."/>
            <person name="Malfatti S."/>
            <person name="Shin M."/>
            <person name="Vergez L."/>
            <person name="Schmutz J."/>
            <person name="Larimer F."/>
            <person name="Land M."/>
            <person name="Hauser L."/>
            <person name="Kyrpides N."/>
            <person name="Kim E."/>
            <person name="Tiedje J."/>
            <person name="Richardson P."/>
        </authorList>
    </citation>
    <scope>NUCLEOTIDE SEQUENCE [LARGE SCALE GENOMIC DNA]</scope>
    <source>
        <strain>ATCC 17616 / 249</strain>
    </source>
</reference>
<reference key="2">
    <citation type="submission" date="2007-04" db="EMBL/GenBank/DDBJ databases">
        <title>Complete genome sequence of Burkholderia multivorans ATCC 17616.</title>
        <authorList>
            <person name="Ohtsubo Y."/>
            <person name="Yamashita A."/>
            <person name="Kurokawa K."/>
            <person name="Takami H."/>
            <person name="Yuhara S."/>
            <person name="Nishiyama E."/>
            <person name="Endo R."/>
            <person name="Miyazaki R."/>
            <person name="Ono A."/>
            <person name="Yano K."/>
            <person name="Ito M."/>
            <person name="Sota M."/>
            <person name="Yuji N."/>
            <person name="Hattori M."/>
            <person name="Tsuda M."/>
        </authorList>
    </citation>
    <scope>NUCLEOTIDE SEQUENCE [LARGE SCALE GENOMIC DNA]</scope>
    <source>
        <strain>ATCC 17616 / 249</strain>
    </source>
</reference>
<accession>A9AI82</accession>
<sequence>MILYEYPFNERIRTLLRLEDLFERFAFFLAQEDPREHHVALTTLFEIAEVTGRADLKSDLMKELERQRQTLAPFRGNPGIEQNALEAVLGEIEQTLANLAQMQGKTGQHLVDNEWLASIRSRAVIPGGTCKFDLPSYYAWQQWPAEQRRQDIAKWIMPLLPLRDAATIVLRLARESGQASKVMAMQGSYQQMLSGRSYQLMQVRVPRELHVIPEASANKYMLWVRFTMQDGDVRPRAVDIDVPFQLTLCNL</sequence>